<protein>
    <recommendedName>
        <fullName>Uncharacterized protein in pepC 5'region</fullName>
    </recommendedName>
    <alternativeName>
        <fullName>ORF 2</fullName>
    </alternativeName>
</protein>
<reference key="1">
    <citation type="journal article" date="1993" name="Appl. Environ. Microbiol.">
        <title>Cloning and sequencing of pepC, a cysteine aminopeptidase gene from Lactococcus lactis subsp. cremoris AM2.</title>
        <authorList>
            <person name="Chapot-Chartier M.P."/>
            <person name="Nardi M."/>
            <person name="Chopin M.-C."/>
            <person name="Chopin A."/>
            <person name="Gripon J.-C."/>
        </authorList>
    </citation>
    <scope>NUCLEOTIDE SEQUENCE [GENOMIC DNA]</scope>
    <source>
        <strain>AM2</strain>
    </source>
</reference>
<sequence length="195" mass="22186">AEQLVIDYSEKSVIVQKEKLIAKNTDENLKLIFTDGVQQKEINQFISKSQAFVAGLMHDIGGVYPNHQRVEKAELFGIELLTEEREFPLIIHQKLSKYLAREHFKITDENILSAIECHTTLKENFTELDLIVFLADKISWDGGDNAPFKEGLLTALSVNLQSAALYYIDFIINDGLKVAHPWLLEAKKDLENQLS</sequence>
<dbReference type="EMBL" id="M86245">
    <property type="protein sequence ID" value="AAA74513.1"/>
    <property type="molecule type" value="Genomic_DNA"/>
</dbReference>
<dbReference type="PIR" id="A48957">
    <property type="entry name" value="A48957"/>
</dbReference>
<dbReference type="SMR" id="Q04731"/>
<dbReference type="CDD" id="cd00077">
    <property type="entry name" value="HDc"/>
    <property type="match status" value="1"/>
</dbReference>
<dbReference type="Gene3D" id="1.10.3210.10">
    <property type="entry name" value="Hypothetical protein af1432"/>
    <property type="match status" value="1"/>
</dbReference>
<dbReference type="InterPro" id="IPR051094">
    <property type="entry name" value="Diverse_Catalytic_Enzymes"/>
</dbReference>
<dbReference type="InterPro" id="IPR003607">
    <property type="entry name" value="HD/PDEase_dom"/>
</dbReference>
<dbReference type="InterPro" id="IPR006674">
    <property type="entry name" value="HD_domain"/>
</dbReference>
<dbReference type="PANTHER" id="PTHR35795:SF1">
    <property type="entry name" value="BIS(5'-NUCLEOSYL)-TETRAPHOSPHATASE, SYMMETRICAL"/>
    <property type="match status" value="1"/>
</dbReference>
<dbReference type="PANTHER" id="PTHR35795">
    <property type="entry name" value="SLR1885 PROTEIN"/>
    <property type="match status" value="1"/>
</dbReference>
<dbReference type="Pfam" id="PF01966">
    <property type="entry name" value="HD"/>
    <property type="match status" value="1"/>
</dbReference>
<dbReference type="SUPFAM" id="SSF109604">
    <property type="entry name" value="HD-domain/PDEase-like"/>
    <property type="match status" value="1"/>
</dbReference>
<dbReference type="PROSITE" id="PS51831">
    <property type="entry name" value="HD"/>
    <property type="match status" value="1"/>
</dbReference>
<organism>
    <name type="scientific">Lactococcus lactis subsp. cremoris</name>
    <name type="common">Streptococcus cremoris</name>
    <dbReference type="NCBI Taxonomy" id="1359"/>
    <lineage>
        <taxon>Bacteria</taxon>
        <taxon>Bacillati</taxon>
        <taxon>Bacillota</taxon>
        <taxon>Bacilli</taxon>
        <taxon>Lactobacillales</taxon>
        <taxon>Streptococcaceae</taxon>
        <taxon>Lactococcus</taxon>
    </lineage>
</organism>
<name>YPEC_LACLC</name>
<feature type="chain" id="PRO_0000066397" description="Uncharacterized protein in pepC 5'region">
    <location>
        <begin position="1" status="less than"/>
        <end position="195"/>
    </location>
</feature>
<feature type="domain" description="HD" evidence="1">
    <location>
        <begin position="24"/>
        <end position="141"/>
    </location>
</feature>
<feature type="non-terminal residue">
    <location>
        <position position="1"/>
    </location>
</feature>
<proteinExistence type="predicted"/>
<accession>Q04731</accession>
<evidence type="ECO:0000255" key="1">
    <source>
        <dbReference type="PROSITE-ProRule" id="PRU01175"/>
    </source>
</evidence>